<evidence type="ECO:0000255" key="1">
    <source>
        <dbReference type="HAMAP-Rule" id="MF_00557"/>
    </source>
</evidence>
<evidence type="ECO:0000269" key="2">
    <source>
    </source>
</evidence>
<evidence type="ECO:0000303" key="3">
    <source>
    </source>
</evidence>
<evidence type="ECO:0000305" key="4">
    <source>
    </source>
</evidence>
<gene>
    <name evidence="1 3" type="primary">algL</name>
</gene>
<accession>Q9L7P2</accession>
<keyword id="KW-0903">Direct protein sequencing</keyword>
<keyword id="KW-0456">Lyase</keyword>
<keyword id="KW-0574">Periplasm</keyword>
<keyword id="KW-0732">Signal</keyword>
<organism>
    <name type="scientific">Pseudomonas syringae pv. syringae</name>
    <dbReference type="NCBI Taxonomy" id="321"/>
    <lineage>
        <taxon>Bacteria</taxon>
        <taxon>Pseudomonadati</taxon>
        <taxon>Pseudomonadota</taxon>
        <taxon>Gammaproteobacteria</taxon>
        <taxon>Pseudomonadales</taxon>
        <taxon>Pseudomonadaceae</taxon>
        <taxon>Pseudomonas</taxon>
        <taxon>Pseudomonas syringae</taxon>
    </lineage>
</organism>
<dbReference type="EC" id="4.2.2.3" evidence="1 2"/>
<dbReference type="EMBL" id="AF222020">
    <property type="protein sequence ID" value="AAF32371.1"/>
    <property type="molecule type" value="Genomic_DNA"/>
</dbReference>
<dbReference type="RefSeq" id="WP_003365409.1">
    <property type="nucleotide sequence ID" value="NZ_MLEV01000001.1"/>
</dbReference>
<dbReference type="SMR" id="Q9L7P2"/>
<dbReference type="CAZy" id="PL5">
    <property type="family name" value="Polysaccharide Lyase Family 5"/>
</dbReference>
<dbReference type="PATRIC" id="fig|321.63.peg.1597"/>
<dbReference type="BRENDA" id="4.2.2.3">
    <property type="organism ID" value="5193"/>
</dbReference>
<dbReference type="GO" id="GO:0042597">
    <property type="term" value="C:periplasmic space"/>
    <property type="evidence" value="ECO:0007669"/>
    <property type="project" value="UniProtKB-SubCell"/>
</dbReference>
<dbReference type="GO" id="GO:0045135">
    <property type="term" value="F:poly(beta-D-mannuronate) lyase activity"/>
    <property type="evidence" value="ECO:0007669"/>
    <property type="project" value="UniProtKB-UniRule"/>
</dbReference>
<dbReference type="GO" id="GO:0042122">
    <property type="term" value="P:alginic acid catabolic process"/>
    <property type="evidence" value="ECO:0007669"/>
    <property type="project" value="UniProtKB-UniRule"/>
</dbReference>
<dbReference type="CDD" id="cd00244">
    <property type="entry name" value="AlgLyase"/>
    <property type="match status" value="1"/>
</dbReference>
<dbReference type="Gene3D" id="1.50.10.100">
    <property type="entry name" value="Chondroitin AC/alginate lyase"/>
    <property type="match status" value="1"/>
</dbReference>
<dbReference type="HAMAP" id="MF_00557">
    <property type="entry name" value="Alginate_lyase"/>
    <property type="match status" value="1"/>
</dbReference>
<dbReference type="InterPro" id="IPR022859">
    <property type="entry name" value="Alginate_lyase"/>
</dbReference>
<dbReference type="InterPro" id="IPR008397">
    <property type="entry name" value="Alginate_lyase_dom"/>
</dbReference>
<dbReference type="InterPro" id="IPR008929">
    <property type="entry name" value="Chondroitin_lyas"/>
</dbReference>
<dbReference type="NCBIfam" id="NF001467">
    <property type="entry name" value="PRK00325.1-2"/>
    <property type="match status" value="1"/>
</dbReference>
<dbReference type="NCBIfam" id="NF001468">
    <property type="entry name" value="PRK00325.1-3"/>
    <property type="match status" value="1"/>
</dbReference>
<dbReference type="Pfam" id="PF05426">
    <property type="entry name" value="Alginate_lyase"/>
    <property type="match status" value="1"/>
</dbReference>
<dbReference type="SUPFAM" id="SSF48230">
    <property type="entry name" value="Chondroitin AC/alginate lyase"/>
    <property type="match status" value="1"/>
</dbReference>
<comment type="function">
    <text evidence="1 2">Catalyzes the depolymerization of alginate by cleaving the beta-1,4 glycosidic bond between two adjacent sugar residues via a beta-elimination mechanism. Degrades deacetylated polymannuronate (polyM) alginate from P.aeruginosa more efficiently than non-deacetylated polyM and alginate from M.pyrifera. AlgL from P.syringae also degrades its own alginate, which may indicate a role in cleaving preformed alginate and/or in determining the length of the alginate polymer (PubMed:11029455). May serve to degrade mislocalized alginate that is trapped in the periplasmic space (By similarity).</text>
</comment>
<comment type="catalytic activity">
    <reaction evidence="1 2">
        <text>Eliminative cleavage of alginate to give oligosaccharides with 4-deoxy-alpha-L-erythro-hex-4-enuronosyl groups at their non-reducing ends and beta-D-mannuronate at their reducing end.</text>
        <dbReference type="EC" id="4.2.2.3"/>
    </reaction>
</comment>
<comment type="activity regulation">
    <text evidence="2">The monovalent cation sodium enhances activity but is not absolutely required.</text>
</comment>
<comment type="biophysicochemical properties">
    <phDependence>
        <text evidence="2">Optimum pH is 7.0.</text>
    </phDependence>
    <temperatureDependence>
        <text evidence="2">Optimum temperature is 42 degrees Celsius.</text>
    </temperatureDependence>
</comment>
<comment type="subcellular location">
    <subcellularLocation>
        <location evidence="2">Periplasm</location>
    </subcellularLocation>
</comment>
<comment type="similarity">
    <text evidence="1">Belongs to the polysaccharide lyase 5 family.</text>
</comment>
<name>ALGL_PSESY</name>
<sequence length="378" mass="42542">MQTPKLIRPTLLSMAILSSMAWATGASAALVPPKGYDAPIEKMKTGDHNFSCEAIPKPYTDKLVFRSKYEGSDKARATLNAVSEEAFRDATKDITTLERGVSKVVMQYMRDGRPEQLDCALNMMTTWAKADALESREFNHTGKSMRKWALGSMSSAYLRLKFSESHPLANRQQDAKIIETWFSKLADQVVSDWSNLPLEKINNHSYWAAWSVMATAVATNRQDLFDWAVKEYKVAANQVDKDGFLPNEMKRRQRALSYHNYALPPLAMIASFAQANGVDLRPENNGALKRLGDRVLAGVKDPSIFAEHNGEKQDMTDLKKDPKFAWLEPYCSLYTCSPDVLEEKHEKQPFKTFRLGGDLTKVYDPTHEKGDKGDNDGS</sequence>
<protein>
    <recommendedName>
        <fullName evidence="1 3">Alginate lyase</fullName>
        <ecNumber evidence="1 2">4.2.2.3</ecNumber>
    </recommendedName>
    <alternativeName>
        <fullName evidence="1 4">Poly(beta-D-mannuronate) lyase</fullName>
    </alternativeName>
</protein>
<reference key="1">
    <citation type="journal article" date="2000" name="J. Bacteriol.">
        <title>Characterization of alginate lyase from Pseudomonas syringae pv. syringae.</title>
        <authorList>
            <person name="Preston L.A."/>
            <person name="Wong T.Y."/>
            <person name="Bender C.L."/>
            <person name="Schiller N.L."/>
        </authorList>
    </citation>
    <scope>NUCLEOTIDE SEQUENCE [GENOMIC DNA]</scope>
    <scope>PROTEIN SEQUENCE OF 29-38</scope>
    <scope>FUNCTION</scope>
    <scope>CATALYTIC ACTIVITY</scope>
    <scope>SUBSTRATE SPECIFICITY</scope>
    <scope>ACTIVITY REGULATION</scope>
    <scope>BIOPHYSICOCHEMICAL PROPERTIES</scope>
    <scope>SUBCELLULAR LOCATION</scope>
    <scope>MUTAGENESIS OF HIS-204 AND TRP-207</scope>
    <source>
        <strain>FF5</strain>
    </source>
</reference>
<proteinExistence type="evidence at protein level"/>
<feature type="signal peptide" evidence="2">
    <location>
        <begin position="1"/>
        <end position="28"/>
    </location>
</feature>
<feature type="chain" id="PRO_0000024922" description="Alginate lyase">
    <location>
        <begin position="29"/>
        <end position="378"/>
    </location>
</feature>
<feature type="binding site" evidence="1">
    <location>
        <begin position="67"/>
        <end position="68"/>
    </location>
    <ligand>
        <name>substrate</name>
    </ligand>
</feature>
<feature type="binding site" evidence="1">
    <location>
        <begin position="140"/>
        <end position="141"/>
    </location>
    <ligand>
        <name>substrate</name>
    </ligand>
</feature>
<feature type="binding site" evidence="1">
    <location>
        <position position="258"/>
    </location>
    <ligand>
        <name>substrate</name>
    </ligand>
</feature>
<feature type="mutagenesis site" description="Loss of activity." evidence="2">
    <original>H</original>
    <variation>A</variation>
    <location>
        <position position="204"/>
    </location>
</feature>
<feature type="mutagenesis site" description="Loss of activity." evidence="2">
    <original>W</original>
    <variation>A</variation>
    <location>
        <position position="207"/>
    </location>
</feature>